<organism>
    <name type="scientific">Deinococcus radiodurans (strain ATCC 13939 / DSM 20539 / JCM 16871 / CCUG 27074 / LMG 4051 / NBRC 15346 / NCIMB 9279 / VKM B-1422 / R1)</name>
    <dbReference type="NCBI Taxonomy" id="243230"/>
    <lineage>
        <taxon>Bacteria</taxon>
        <taxon>Thermotogati</taxon>
        <taxon>Deinococcota</taxon>
        <taxon>Deinococci</taxon>
        <taxon>Deinococcales</taxon>
        <taxon>Deinococcaceae</taxon>
        <taxon>Deinococcus</taxon>
    </lineage>
</organism>
<sequence>MTVTEVAPQALPFQELQEKILPELHLLAAGLGIENYRKLKKDALALAIMEKQADAEGQSLARGYLDITSDGYGFLQADLLDPASRSVLVTAGVIKQYHLRTGDEVIGRARKPRENERYGSLVRVEAVNGLDPEAARQRPRFDDLTPTFPDQQLVLEDPSTDDGLSLRVVDLLVPIGRGQRALIVAPPKAGKTTLLKKIANSITKNYPDVTVMVLLVDERPEEVTDFRESVQGAQVIASTFDEPPQHHVRVAEFVHERARRIVEEGGHVVILLDSITRLARANNLVTPPTGRTLSGGLDSNALHWPKRFLGAARNIREGGSLTILATALVETGSRMDDVIFEEFKGTGNAELVLSRRLEERRIFPALDILKSGTRREELLLQPEVLKKMWLLRKVISDMDPADAMEMLLGRMGKTRNNVEFLAALAG</sequence>
<proteinExistence type="inferred from homology"/>
<evidence type="ECO:0000255" key="1">
    <source>
        <dbReference type="HAMAP-Rule" id="MF_01884"/>
    </source>
</evidence>
<evidence type="ECO:0000255" key="2">
    <source>
        <dbReference type="PROSITE-ProRule" id="PRU01203"/>
    </source>
</evidence>
<evidence type="ECO:0000305" key="3"/>
<name>RHO_DEIRA</name>
<keyword id="KW-0067">ATP-binding</keyword>
<keyword id="KW-0347">Helicase</keyword>
<keyword id="KW-0378">Hydrolase</keyword>
<keyword id="KW-0547">Nucleotide-binding</keyword>
<keyword id="KW-1185">Reference proteome</keyword>
<keyword id="KW-0694">RNA-binding</keyword>
<keyword id="KW-0804">Transcription</keyword>
<keyword id="KW-0805">Transcription regulation</keyword>
<keyword id="KW-0806">Transcription termination</keyword>
<comment type="function">
    <text evidence="1">Facilitates transcription termination by a mechanism that involves Rho binding to the nascent RNA, activation of Rho's RNA-dependent ATPase activity, and release of the mRNA from the DNA template.</text>
</comment>
<comment type="subunit">
    <text evidence="1">Homohexamer. The homohexamer assembles into an open ring structure.</text>
</comment>
<comment type="similarity">
    <text evidence="1">Belongs to the Rho family.</text>
</comment>
<reference key="1">
    <citation type="journal article" date="1994" name="J. Bacteriol.">
        <title>Phylogenetic analysis of sequences from diverse bacteria with homology to the Escherichia coli rho gene.</title>
        <authorList>
            <person name="Opperman T."/>
            <person name="Richardson J.P."/>
        </authorList>
    </citation>
    <scope>NUCLEOTIDE SEQUENCE [GENOMIC DNA]</scope>
    <source>
        <strain>298</strain>
    </source>
</reference>
<reference key="2">
    <citation type="journal article" date="1999" name="Science">
        <title>Genome sequence of the radioresistant bacterium Deinococcus radiodurans R1.</title>
        <authorList>
            <person name="White O."/>
            <person name="Eisen J.A."/>
            <person name="Heidelberg J.F."/>
            <person name="Hickey E.K."/>
            <person name="Peterson J.D."/>
            <person name="Dodson R.J."/>
            <person name="Haft D.H."/>
            <person name="Gwinn M.L."/>
            <person name="Nelson W.C."/>
            <person name="Richardson D.L."/>
            <person name="Moffat K.S."/>
            <person name="Qin H."/>
            <person name="Jiang L."/>
            <person name="Pamphile W."/>
            <person name="Crosby M."/>
            <person name="Shen M."/>
            <person name="Vamathevan J.J."/>
            <person name="Lam P."/>
            <person name="McDonald L.A."/>
            <person name="Utterback T.R."/>
            <person name="Zalewski C."/>
            <person name="Makarova K.S."/>
            <person name="Aravind L."/>
            <person name="Daly M.J."/>
            <person name="Minton K.W."/>
            <person name="Fleischmann R.D."/>
            <person name="Ketchum K.A."/>
            <person name="Nelson K.E."/>
            <person name="Salzberg S.L."/>
            <person name="Smith H.O."/>
            <person name="Venter J.C."/>
            <person name="Fraser C.M."/>
        </authorList>
    </citation>
    <scope>NUCLEOTIDE SEQUENCE [LARGE SCALE GENOMIC DNA]</scope>
    <source>
        <strain>ATCC 13939 / DSM 20539 / JCM 16871 / CCUG 27074 / LMG 4051 / NBRC 15346 / NCIMB 9279 / VKM B-1422 / R1</strain>
    </source>
</reference>
<dbReference type="EC" id="3.6.4.-" evidence="1"/>
<dbReference type="EMBL" id="L27276">
    <property type="protein sequence ID" value="AAA59208.1"/>
    <property type="molecule type" value="Genomic_DNA"/>
</dbReference>
<dbReference type="EMBL" id="AE000513">
    <property type="protein sequence ID" value="AAF10910.1"/>
    <property type="molecule type" value="Genomic_DNA"/>
</dbReference>
<dbReference type="PIR" id="H75407">
    <property type="entry name" value="H75407"/>
</dbReference>
<dbReference type="RefSeq" id="NP_295061.1">
    <property type="nucleotide sequence ID" value="NC_001263.1"/>
</dbReference>
<dbReference type="RefSeq" id="WP_010887979.1">
    <property type="nucleotide sequence ID" value="NC_001263.1"/>
</dbReference>
<dbReference type="SMR" id="P52153"/>
<dbReference type="FunCoup" id="P52153">
    <property type="interactions" value="284"/>
</dbReference>
<dbReference type="STRING" id="243230.DR_1338"/>
<dbReference type="PaxDb" id="243230-DR_1338"/>
<dbReference type="EnsemblBacteria" id="AAF10910">
    <property type="protein sequence ID" value="AAF10910"/>
    <property type="gene ID" value="DR_1338"/>
</dbReference>
<dbReference type="GeneID" id="69517584"/>
<dbReference type="KEGG" id="dra:DR_1338"/>
<dbReference type="PATRIC" id="fig|243230.17.peg.1535"/>
<dbReference type="eggNOG" id="COG1158">
    <property type="taxonomic scope" value="Bacteria"/>
</dbReference>
<dbReference type="HOGENOM" id="CLU_016377_4_3_0"/>
<dbReference type="InParanoid" id="P52153"/>
<dbReference type="OrthoDB" id="9805197at2"/>
<dbReference type="Proteomes" id="UP000002524">
    <property type="component" value="Chromosome 1"/>
</dbReference>
<dbReference type="GO" id="GO:0005524">
    <property type="term" value="F:ATP binding"/>
    <property type="evidence" value="ECO:0007669"/>
    <property type="project" value="UniProtKB-UniRule"/>
</dbReference>
<dbReference type="GO" id="GO:0016887">
    <property type="term" value="F:ATP hydrolysis activity"/>
    <property type="evidence" value="ECO:0007669"/>
    <property type="project" value="InterPro"/>
</dbReference>
<dbReference type="GO" id="GO:0008186">
    <property type="term" value="F:ATP-dependent activity, acting on RNA"/>
    <property type="evidence" value="ECO:0007669"/>
    <property type="project" value="InterPro"/>
</dbReference>
<dbReference type="GO" id="GO:0004386">
    <property type="term" value="F:helicase activity"/>
    <property type="evidence" value="ECO:0007669"/>
    <property type="project" value="UniProtKB-UniRule"/>
</dbReference>
<dbReference type="GO" id="GO:0003723">
    <property type="term" value="F:RNA binding"/>
    <property type="evidence" value="ECO:0007669"/>
    <property type="project" value="UniProtKB-UniRule"/>
</dbReference>
<dbReference type="GO" id="GO:0006353">
    <property type="term" value="P:DNA-templated transcription termination"/>
    <property type="evidence" value="ECO:0000318"/>
    <property type="project" value="GO_Central"/>
</dbReference>
<dbReference type="CDD" id="cd04459">
    <property type="entry name" value="Rho_CSD"/>
    <property type="match status" value="1"/>
</dbReference>
<dbReference type="CDD" id="cd01128">
    <property type="entry name" value="rho_factor_C"/>
    <property type="match status" value="1"/>
</dbReference>
<dbReference type="Gene3D" id="2.40.50.140">
    <property type="entry name" value="Nucleic acid-binding proteins"/>
    <property type="match status" value="1"/>
</dbReference>
<dbReference type="Gene3D" id="3.40.50.300">
    <property type="entry name" value="P-loop containing nucleotide triphosphate hydrolases"/>
    <property type="match status" value="1"/>
</dbReference>
<dbReference type="HAMAP" id="MF_01884">
    <property type="entry name" value="Rho"/>
    <property type="match status" value="1"/>
</dbReference>
<dbReference type="InterPro" id="IPR003593">
    <property type="entry name" value="AAA+_ATPase"/>
</dbReference>
<dbReference type="InterPro" id="IPR000194">
    <property type="entry name" value="ATPase_F1/V1/A1_a/bsu_nucl-bd"/>
</dbReference>
<dbReference type="InterPro" id="IPR011129">
    <property type="entry name" value="CSD"/>
</dbReference>
<dbReference type="InterPro" id="IPR012340">
    <property type="entry name" value="NA-bd_OB-fold"/>
</dbReference>
<dbReference type="InterPro" id="IPR027417">
    <property type="entry name" value="P-loop_NTPase"/>
</dbReference>
<dbReference type="InterPro" id="IPR011112">
    <property type="entry name" value="Rho-like_N"/>
</dbReference>
<dbReference type="InterPro" id="IPR041703">
    <property type="entry name" value="Rho_factor_ATP-bd"/>
</dbReference>
<dbReference type="InterPro" id="IPR036269">
    <property type="entry name" value="Rho_N_sf"/>
</dbReference>
<dbReference type="InterPro" id="IPR011113">
    <property type="entry name" value="Rho_RNA-bd"/>
</dbReference>
<dbReference type="InterPro" id="IPR004665">
    <property type="entry name" value="Term_rho"/>
</dbReference>
<dbReference type="NCBIfam" id="NF006886">
    <property type="entry name" value="PRK09376.1"/>
    <property type="match status" value="1"/>
</dbReference>
<dbReference type="NCBIfam" id="TIGR00767">
    <property type="entry name" value="rho"/>
    <property type="match status" value="1"/>
</dbReference>
<dbReference type="PANTHER" id="PTHR46425">
    <property type="entry name" value="TRANSCRIPTION TERMINATION FACTOR RHO"/>
    <property type="match status" value="1"/>
</dbReference>
<dbReference type="PANTHER" id="PTHR46425:SF1">
    <property type="entry name" value="TRANSCRIPTION TERMINATION FACTOR RHO"/>
    <property type="match status" value="1"/>
</dbReference>
<dbReference type="Pfam" id="PF00006">
    <property type="entry name" value="ATP-synt_ab"/>
    <property type="match status" value="1"/>
</dbReference>
<dbReference type="Pfam" id="PF07498">
    <property type="entry name" value="Rho_N"/>
    <property type="match status" value="1"/>
</dbReference>
<dbReference type="Pfam" id="PF07497">
    <property type="entry name" value="Rho_RNA_bind"/>
    <property type="match status" value="1"/>
</dbReference>
<dbReference type="SMART" id="SM00382">
    <property type="entry name" value="AAA"/>
    <property type="match status" value="1"/>
</dbReference>
<dbReference type="SMART" id="SM00357">
    <property type="entry name" value="CSP"/>
    <property type="match status" value="1"/>
</dbReference>
<dbReference type="SMART" id="SM00959">
    <property type="entry name" value="Rho_N"/>
    <property type="match status" value="1"/>
</dbReference>
<dbReference type="SUPFAM" id="SSF52540">
    <property type="entry name" value="P-loop containing nucleoside triphosphate hydrolases"/>
    <property type="match status" value="1"/>
</dbReference>
<dbReference type="SUPFAM" id="SSF68912">
    <property type="entry name" value="Rho N-terminal domain-like"/>
    <property type="match status" value="1"/>
</dbReference>
<dbReference type="PROSITE" id="PS51856">
    <property type="entry name" value="RHO_RNA_BD"/>
    <property type="match status" value="1"/>
</dbReference>
<feature type="chain" id="PRO_0000188961" description="Transcription termination factor Rho">
    <location>
        <begin position="1"/>
        <end position="426"/>
    </location>
</feature>
<feature type="domain" description="Rho RNA-BD" evidence="2">
    <location>
        <begin position="58"/>
        <end position="131"/>
    </location>
</feature>
<feature type="binding site" evidence="1">
    <location>
        <begin position="176"/>
        <end position="181"/>
    </location>
    <ligand>
        <name>ATP</name>
        <dbReference type="ChEBI" id="CHEBI:30616"/>
    </ligand>
</feature>
<feature type="binding site" evidence="1">
    <location>
        <begin position="188"/>
        <end position="193"/>
    </location>
    <ligand>
        <name>ATP</name>
        <dbReference type="ChEBI" id="CHEBI:30616"/>
    </ligand>
</feature>
<feature type="binding site" evidence="1">
    <location>
        <position position="219"/>
    </location>
    <ligand>
        <name>ATP</name>
        <dbReference type="ChEBI" id="CHEBI:30616"/>
    </ligand>
</feature>
<feature type="sequence conflict" description="In Ref. 1." evidence="3" ref="1">
    <original>MTVTEVAP</original>
    <variation>MTATDAA</variation>
    <location>
        <begin position="1"/>
        <end position="8"/>
    </location>
</feature>
<feature type="sequence conflict" description="In Ref. 1; AAA59208." evidence="3" ref="1">
    <original>A</original>
    <variation>G</variation>
    <location>
        <position position="83"/>
    </location>
</feature>
<feature type="sequence conflict" description="In Ref. 1; AAA59208." evidence="3" ref="1">
    <original>V</original>
    <variation>I</variation>
    <location>
        <position position="93"/>
    </location>
</feature>
<feature type="sequence conflict" description="In Ref. 1; AAA59208." evidence="3" ref="1">
    <original>Q</original>
    <variation>L</variation>
    <location>
        <position position="137"/>
    </location>
</feature>
<feature type="sequence conflict" description="In Ref. 1; AAA59208." evidence="3" ref="1">
    <original>S</original>
    <variation>T</variation>
    <location>
        <position position="159"/>
    </location>
</feature>
<feature type="sequence conflict" description="In Ref. 1; AAA59208." evidence="3" ref="1">
    <original>T</original>
    <variation>V</variation>
    <location>
        <position position="203"/>
    </location>
</feature>
<feature type="sequence conflict" description="In Ref. 1; AAA59208." evidence="3" ref="1">
    <original>A</original>
    <variation>S</variation>
    <location>
        <position position="422"/>
    </location>
</feature>
<gene>
    <name evidence="1" type="primary">rho</name>
    <name type="ordered locus">DR_1338</name>
</gene>
<accession>P52153</accession>
<protein>
    <recommendedName>
        <fullName evidence="1">Transcription termination factor Rho</fullName>
        <ecNumber evidence="1">3.6.4.-</ecNumber>
    </recommendedName>
    <alternativeName>
        <fullName evidence="1">ATP-dependent helicase Rho</fullName>
    </alternativeName>
</protein>